<name>RS20_HAEIN</name>
<sequence length="87" mass="9638">MANIKSAKKRAVQSEKRRQHNASQRSMMRTYIKKVYAQVAAGEKSAAEAAFVEMQKVVDRMASKGLIHANKAANHKSKLAAQIKKLA</sequence>
<reference key="1">
    <citation type="journal article" date="1995" name="Science">
        <title>Whole-genome random sequencing and assembly of Haemophilus influenzae Rd.</title>
        <authorList>
            <person name="Fleischmann R.D."/>
            <person name="Adams M.D."/>
            <person name="White O."/>
            <person name="Clayton R.A."/>
            <person name="Kirkness E.F."/>
            <person name="Kerlavage A.R."/>
            <person name="Bult C.J."/>
            <person name="Tomb J.-F."/>
            <person name="Dougherty B.A."/>
            <person name="Merrick J.M."/>
            <person name="McKenney K."/>
            <person name="Sutton G.G."/>
            <person name="FitzHugh W."/>
            <person name="Fields C.A."/>
            <person name="Gocayne J.D."/>
            <person name="Scott J.D."/>
            <person name="Shirley R."/>
            <person name="Liu L.-I."/>
            <person name="Glodek A."/>
            <person name="Kelley J.M."/>
            <person name="Weidman J.F."/>
            <person name="Phillips C.A."/>
            <person name="Spriggs T."/>
            <person name="Hedblom E."/>
            <person name="Cotton M.D."/>
            <person name="Utterback T.R."/>
            <person name="Hanna M.C."/>
            <person name="Nguyen D.T."/>
            <person name="Saudek D.M."/>
            <person name="Brandon R.C."/>
            <person name="Fine L.D."/>
            <person name="Fritchman J.L."/>
            <person name="Fuhrmann J.L."/>
            <person name="Geoghagen N.S.M."/>
            <person name="Gnehm C.L."/>
            <person name="McDonald L.A."/>
            <person name="Small K.V."/>
            <person name="Fraser C.M."/>
            <person name="Smith H.O."/>
            <person name="Venter J.C."/>
        </authorList>
    </citation>
    <scope>NUCLEOTIDE SEQUENCE [LARGE SCALE GENOMIC DNA]</scope>
    <source>
        <strain>ATCC 51907 / DSM 11121 / KW20 / Rd</strain>
    </source>
</reference>
<protein>
    <recommendedName>
        <fullName evidence="2">Small ribosomal subunit protein bS20</fullName>
    </recommendedName>
    <alternativeName>
        <fullName evidence="4">30S ribosomal protein S20</fullName>
    </alternativeName>
</protein>
<feature type="initiator methionine" description="Removed" evidence="1">
    <location>
        <position position="1"/>
    </location>
</feature>
<feature type="chain" id="PRO_0000167969" description="Small ribosomal subunit protein bS20">
    <location>
        <begin position="2"/>
        <end position="87"/>
    </location>
</feature>
<feature type="region of interest" description="Disordered" evidence="3">
    <location>
        <begin position="1"/>
        <end position="27"/>
    </location>
</feature>
<feature type="compositionally biased region" description="Basic residues" evidence="3">
    <location>
        <begin position="1"/>
        <end position="11"/>
    </location>
</feature>
<comment type="function">
    <text evidence="2">Binds directly to 16S ribosomal RNA.</text>
</comment>
<comment type="similarity">
    <text evidence="2">Belongs to the bacterial ribosomal protein bS20 family.</text>
</comment>
<gene>
    <name evidence="2" type="primary">rpsT</name>
    <name type="ordered locus">HI_0965</name>
</gene>
<keyword id="KW-1185">Reference proteome</keyword>
<keyword id="KW-0687">Ribonucleoprotein</keyword>
<keyword id="KW-0689">Ribosomal protein</keyword>
<keyword id="KW-0694">RNA-binding</keyword>
<keyword id="KW-0699">rRNA-binding</keyword>
<dbReference type="EMBL" id="L42023">
    <property type="protein sequence ID" value="AAC22624.1"/>
    <property type="status" value="ALT_SEQ"/>
    <property type="molecule type" value="Genomic_DNA"/>
</dbReference>
<dbReference type="PIR" id="A64163">
    <property type="entry name" value="A64163"/>
</dbReference>
<dbReference type="RefSeq" id="NP_439126.2">
    <property type="nucleotide sequence ID" value="NC_000907.1"/>
</dbReference>
<dbReference type="SMR" id="P44959"/>
<dbReference type="STRING" id="71421.HI_0965"/>
<dbReference type="EnsemblBacteria" id="AAC22624">
    <property type="protein sequence ID" value="AAC22624"/>
    <property type="gene ID" value="HI_0965"/>
</dbReference>
<dbReference type="KEGG" id="hin:HI_0965"/>
<dbReference type="PATRIC" id="fig|71421.8.peg.1007"/>
<dbReference type="eggNOG" id="COG0268">
    <property type="taxonomic scope" value="Bacteria"/>
</dbReference>
<dbReference type="HOGENOM" id="CLU_160655_4_0_6"/>
<dbReference type="OrthoDB" id="9807974at2"/>
<dbReference type="PhylomeDB" id="P44959"/>
<dbReference type="BioCyc" id="HINF71421:G1GJ1-1006-MONOMER"/>
<dbReference type="Proteomes" id="UP000000579">
    <property type="component" value="Chromosome"/>
</dbReference>
<dbReference type="GO" id="GO:0005829">
    <property type="term" value="C:cytosol"/>
    <property type="evidence" value="ECO:0000318"/>
    <property type="project" value="GO_Central"/>
</dbReference>
<dbReference type="GO" id="GO:0015935">
    <property type="term" value="C:small ribosomal subunit"/>
    <property type="evidence" value="ECO:0000318"/>
    <property type="project" value="GO_Central"/>
</dbReference>
<dbReference type="GO" id="GO:0070181">
    <property type="term" value="F:small ribosomal subunit rRNA binding"/>
    <property type="evidence" value="ECO:0000318"/>
    <property type="project" value="GO_Central"/>
</dbReference>
<dbReference type="GO" id="GO:0003735">
    <property type="term" value="F:structural constituent of ribosome"/>
    <property type="evidence" value="ECO:0007669"/>
    <property type="project" value="InterPro"/>
</dbReference>
<dbReference type="GO" id="GO:0006412">
    <property type="term" value="P:translation"/>
    <property type="evidence" value="ECO:0007669"/>
    <property type="project" value="UniProtKB-UniRule"/>
</dbReference>
<dbReference type="FunFam" id="1.20.58.110:FF:000001">
    <property type="entry name" value="30S ribosomal protein S20"/>
    <property type="match status" value="1"/>
</dbReference>
<dbReference type="Gene3D" id="1.20.58.110">
    <property type="entry name" value="Ribosomal protein S20"/>
    <property type="match status" value="1"/>
</dbReference>
<dbReference type="HAMAP" id="MF_00500">
    <property type="entry name" value="Ribosomal_bS20"/>
    <property type="match status" value="1"/>
</dbReference>
<dbReference type="InterPro" id="IPR002583">
    <property type="entry name" value="Ribosomal_bS20"/>
</dbReference>
<dbReference type="InterPro" id="IPR036510">
    <property type="entry name" value="Ribosomal_bS20_sf"/>
</dbReference>
<dbReference type="NCBIfam" id="TIGR00029">
    <property type="entry name" value="S20"/>
    <property type="match status" value="1"/>
</dbReference>
<dbReference type="PANTHER" id="PTHR33398">
    <property type="entry name" value="30S RIBOSOMAL PROTEIN S20"/>
    <property type="match status" value="1"/>
</dbReference>
<dbReference type="PANTHER" id="PTHR33398:SF1">
    <property type="entry name" value="SMALL RIBOSOMAL SUBUNIT PROTEIN BS20C"/>
    <property type="match status" value="1"/>
</dbReference>
<dbReference type="Pfam" id="PF01649">
    <property type="entry name" value="Ribosomal_S20p"/>
    <property type="match status" value="1"/>
</dbReference>
<dbReference type="SUPFAM" id="SSF46992">
    <property type="entry name" value="Ribosomal protein S20"/>
    <property type="match status" value="1"/>
</dbReference>
<evidence type="ECO:0000250" key="1"/>
<evidence type="ECO:0000255" key="2">
    <source>
        <dbReference type="HAMAP-Rule" id="MF_00500"/>
    </source>
</evidence>
<evidence type="ECO:0000256" key="3">
    <source>
        <dbReference type="SAM" id="MobiDB-lite"/>
    </source>
</evidence>
<evidence type="ECO:0000305" key="4"/>
<accession>P44959</accession>
<organism>
    <name type="scientific">Haemophilus influenzae (strain ATCC 51907 / DSM 11121 / KW20 / Rd)</name>
    <dbReference type="NCBI Taxonomy" id="71421"/>
    <lineage>
        <taxon>Bacteria</taxon>
        <taxon>Pseudomonadati</taxon>
        <taxon>Pseudomonadota</taxon>
        <taxon>Gammaproteobacteria</taxon>
        <taxon>Pasteurellales</taxon>
        <taxon>Pasteurellaceae</taxon>
        <taxon>Haemophilus</taxon>
    </lineage>
</organism>
<proteinExistence type="inferred from homology"/>